<organism>
    <name type="scientific">Salmonella typhi</name>
    <dbReference type="NCBI Taxonomy" id="90370"/>
    <lineage>
        <taxon>Bacteria</taxon>
        <taxon>Pseudomonadati</taxon>
        <taxon>Pseudomonadota</taxon>
        <taxon>Gammaproteobacteria</taxon>
        <taxon>Enterobacterales</taxon>
        <taxon>Enterobacteriaceae</taxon>
        <taxon>Salmonella</taxon>
    </lineage>
</organism>
<name>CLCA_SALTI</name>
<comment type="function">
    <text evidence="1">Proton-coupled chloride transporter. Functions as antiport system and exchanges two chloride ions for 1 proton. Probably acts as an electrical shunt for an outwardly-directed proton pump that is linked to amino acid decarboxylation, as part of the extreme acid resistance (XAR) response.</text>
</comment>
<comment type="catalytic activity">
    <reaction evidence="1">
        <text>2 chloride(in) + H(+)(out) = 2 chloride(out) + H(+)(in)</text>
        <dbReference type="Rhea" id="RHEA:29567"/>
        <dbReference type="ChEBI" id="CHEBI:15378"/>
        <dbReference type="ChEBI" id="CHEBI:17996"/>
    </reaction>
</comment>
<comment type="subunit">
    <text evidence="1">Homodimer.</text>
</comment>
<comment type="subcellular location">
    <subcellularLocation>
        <location evidence="1">Cell inner membrane</location>
        <topology evidence="1">Multi-pass membrane protein</topology>
    </subcellularLocation>
</comment>
<comment type="similarity">
    <text evidence="1">Belongs to the chloride channel (TC 2.A.49) family. ClcA subfamily.</text>
</comment>
<feature type="chain" id="PRO_0000094477" description="H(+)/Cl(-) exchange transporter ClcA">
    <location>
        <begin position="1"/>
        <end position="473"/>
    </location>
</feature>
<feature type="topological domain" description="Cytoplasmic" evidence="1">
    <location>
        <begin position="1"/>
        <end position="32"/>
    </location>
</feature>
<feature type="transmembrane region" description="Helical" evidence="1">
    <location>
        <begin position="33"/>
        <end position="69"/>
    </location>
</feature>
<feature type="topological domain" description="Periplasmic" evidence="1">
    <location>
        <begin position="70"/>
        <end position="76"/>
    </location>
</feature>
<feature type="transmembrane region" description="Helical" evidence="1">
    <location>
        <begin position="77"/>
        <end position="100"/>
    </location>
</feature>
<feature type="intramembrane region" description="Helical" evidence="1">
    <location>
        <begin position="109"/>
        <end position="116"/>
    </location>
</feature>
<feature type="topological domain" description="Cytoplasmic" evidence="1">
    <location>
        <begin position="117"/>
        <end position="123"/>
    </location>
</feature>
<feature type="transmembrane region" description="Helical" evidence="1">
    <location>
        <begin position="124"/>
        <end position="141"/>
    </location>
</feature>
<feature type="transmembrane region" description="Helical" evidence="1">
    <location>
        <begin position="148"/>
        <end position="166"/>
    </location>
</feature>
<feature type="topological domain" description="Cytoplasmic" evidence="1">
    <location>
        <begin position="167"/>
        <end position="176"/>
    </location>
</feature>
<feature type="intramembrane region" description="Helical" evidence="1">
    <location>
        <begin position="177"/>
        <end position="189"/>
    </location>
</feature>
<feature type="intramembrane region" description="Helical" evidence="1">
    <location>
        <begin position="193"/>
        <end position="201"/>
    </location>
</feature>
<feature type="topological domain" description="Cytoplasmic" evidence="1">
    <location>
        <begin position="202"/>
        <end position="214"/>
    </location>
</feature>
<feature type="transmembrane region" description="Helical" evidence="1">
    <location>
        <begin position="215"/>
        <end position="232"/>
    </location>
</feature>
<feature type="topological domain" description="Periplasmic" evidence="1">
    <location>
        <begin position="233"/>
        <end position="252"/>
    </location>
</feature>
<feature type="transmembrane region" description="Helical" evidence="1">
    <location>
        <begin position="253"/>
        <end position="281"/>
    </location>
</feature>
<feature type="topological domain" description="Cytoplasmic" evidence="1">
    <location>
        <begin position="282"/>
        <end position="287"/>
    </location>
</feature>
<feature type="transmembrane region" description="Helical" evidence="1">
    <location>
        <begin position="288"/>
        <end position="309"/>
    </location>
</feature>
<feature type="topological domain" description="Periplasmic" evidence="1">
    <location>
        <begin position="310"/>
        <end position="329"/>
    </location>
</feature>
<feature type="transmembrane region" description="Helical" evidence="1">
    <location>
        <begin position="330"/>
        <end position="349"/>
    </location>
</feature>
<feature type="transmembrane region" description="Helical" evidence="1">
    <location>
        <begin position="355"/>
        <end position="376"/>
    </location>
</feature>
<feature type="topological domain" description="Periplasmic" evidence="1">
    <location>
        <begin position="377"/>
        <end position="386"/>
    </location>
</feature>
<feature type="intramembrane region" description="Helical" evidence="1">
    <location>
        <begin position="387"/>
        <end position="401"/>
    </location>
</feature>
<feature type="intramembrane region" description="Note=Loop between two helices" evidence="1">
    <location>
        <begin position="402"/>
        <end position="404"/>
    </location>
</feature>
<feature type="intramembrane region" description="Helical" evidence="1">
    <location>
        <begin position="405"/>
        <end position="416"/>
    </location>
</feature>
<feature type="intramembrane region" description="Note=Loop between two helices" evidence="1">
    <location>
        <begin position="417"/>
        <end position="421"/>
    </location>
</feature>
<feature type="transmembrane region" description="Helical" evidence="1">
    <location>
        <begin position="422"/>
        <end position="438"/>
    </location>
</feature>
<feature type="topological domain" description="Cytoplasmic" evidence="1">
    <location>
        <begin position="439"/>
        <end position="473"/>
    </location>
</feature>
<feature type="short sequence motif" description="Selectivity filter part_1" evidence="1">
    <location>
        <begin position="106"/>
        <end position="110"/>
    </location>
</feature>
<feature type="short sequence motif" description="Selectivity filter part_2" evidence="1">
    <location>
        <begin position="146"/>
        <end position="150"/>
    </location>
</feature>
<feature type="short sequence motif" description="Selectivity filter part_3" evidence="1">
    <location>
        <begin position="355"/>
        <end position="359"/>
    </location>
</feature>
<feature type="binding site" evidence="1">
    <location>
        <position position="107"/>
    </location>
    <ligand>
        <name>chloride</name>
        <dbReference type="ChEBI" id="CHEBI:17996"/>
    </ligand>
</feature>
<feature type="binding site" evidence="1">
    <location>
        <position position="356"/>
    </location>
    <ligand>
        <name>chloride</name>
        <dbReference type="ChEBI" id="CHEBI:17996"/>
    </ligand>
</feature>
<feature type="binding site" evidence="1">
    <location>
        <position position="357"/>
    </location>
    <ligand>
        <name>chloride</name>
        <dbReference type="ChEBI" id="CHEBI:17996"/>
    </ligand>
</feature>
<feature type="binding site" evidence="1">
    <location>
        <position position="445"/>
    </location>
    <ligand>
        <name>chloride</name>
        <dbReference type="ChEBI" id="CHEBI:17996"/>
    </ligand>
</feature>
<feature type="site" description="Mediates proton transfer from the outer aqueous phase to the interior of the protein; involved in linking H(+) and Cl(-) transport" evidence="1">
    <location>
        <position position="148"/>
    </location>
</feature>
<feature type="site" description="Mediates proton transfer from the protein to the inner aqueous phase" evidence="1">
    <location>
        <position position="203"/>
    </location>
</feature>
<gene>
    <name evidence="1" type="primary">clcA</name>
    <name evidence="1" type="synonym">eriC</name>
    <name type="ordered locus">STY0225</name>
    <name type="ordered locus">t0204</name>
</gene>
<dbReference type="EMBL" id="AL513382">
    <property type="protein sequence ID" value="CAD01357.1"/>
    <property type="molecule type" value="Genomic_DNA"/>
</dbReference>
<dbReference type="EMBL" id="AE014613">
    <property type="protein sequence ID" value="AAO67935.1"/>
    <property type="molecule type" value="Genomic_DNA"/>
</dbReference>
<dbReference type="RefSeq" id="NP_454811.1">
    <property type="nucleotide sequence ID" value="NC_003198.1"/>
</dbReference>
<dbReference type="RefSeq" id="WP_000845433.1">
    <property type="nucleotide sequence ID" value="NZ_WSUR01000009.1"/>
</dbReference>
<dbReference type="SMR" id="Q8Z9B3"/>
<dbReference type="STRING" id="220341.gene:17584259"/>
<dbReference type="KEGG" id="stt:t0204"/>
<dbReference type="KEGG" id="sty:STY0225"/>
<dbReference type="PATRIC" id="fig|220341.7.peg.226"/>
<dbReference type="eggNOG" id="COG0038">
    <property type="taxonomic scope" value="Bacteria"/>
</dbReference>
<dbReference type="HOGENOM" id="CLU_015263_7_0_6"/>
<dbReference type="OMA" id="EGPTAQF"/>
<dbReference type="OrthoDB" id="9767361at2"/>
<dbReference type="Proteomes" id="UP000000541">
    <property type="component" value="Chromosome"/>
</dbReference>
<dbReference type="Proteomes" id="UP000002670">
    <property type="component" value="Chromosome"/>
</dbReference>
<dbReference type="GO" id="GO:0005886">
    <property type="term" value="C:plasma membrane"/>
    <property type="evidence" value="ECO:0007669"/>
    <property type="project" value="UniProtKB-SubCell"/>
</dbReference>
<dbReference type="GO" id="GO:0015297">
    <property type="term" value="F:antiporter activity"/>
    <property type="evidence" value="ECO:0007669"/>
    <property type="project" value="UniProtKB-UniRule"/>
</dbReference>
<dbReference type="GO" id="GO:0005247">
    <property type="term" value="F:voltage-gated chloride channel activity"/>
    <property type="evidence" value="ECO:0007669"/>
    <property type="project" value="TreeGrafter"/>
</dbReference>
<dbReference type="CDD" id="cd01031">
    <property type="entry name" value="EriC"/>
    <property type="match status" value="1"/>
</dbReference>
<dbReference type="FunFam" id="1.10.3080.10:FF:000005">
    <property type="entry name" value="H(+)/Cl(-) exchange transporter ClcA"/>
    <property type="match status" value="1"/>
</dbReference>
<dbReference type="Gene3D" id="1.10.3080.10">
    <property type="entry name" value="Clc chloride channel"/>
    <property type="match status" value="1"/>
</dbReference>
<dbReference type="HAMAP" id="MF_01128">
    <property type="entry name" value="CLC_ClcA"/>
    <property type="match status" value="1"/>
</dbReference>
<dbReference type="InterPro" id="IPR023861">
    <property type="entry name" value="Cl-channel_ClcA"/>
</dbReference>
<dbReference type="InterPro" id="IPR014743">
    <property type="entry name" value="Cl-channel_core"/>
</dbReference>
<dbReference type="InterPro" id="IPR001807">
    <property type="entry name" value="ClC"/>
</dbReference>
<dbReference type="NCBIfam" id="NF003640">
    <property type="entry name" value="PRK05277.1"/>
    <property type="match status" value="1"/>
</dbReference>
<dbReference type="PANTHER" id="PTHR45711">
    <property type="entry name" value="CHLORIDE CHANNEL PROTEIN"/>
    <property type="match status" value="1"/>
</dbReference>
<dbReference type="PANTHER" id="PTHR45711:SF6">
    <property type="entry name" value="CHLORIDE CHANNEL PROTEIN"/>
    <property type="match status" value="1"/>
</dbReference>
<dbReference type="Pfam" id="PF00654">
    <property type="entry name" value="Voltage_CLC"/>
    <property type="match status" value="1"/>
</dbReference>
<dbReference type="PRINTS" id="PR00762">
    <property type="entry name" value="CLCHANNEL"/>
</dbReference>
<dbReference type="SUPFAM" id="SSF81340">
    <property type="entry name" value="Clc chloride channel"/>
    <property type="match status" value="1"/>
</dbReference>
<reference key="1">
    <citation type="journal article" date="2001" name="Nature">
        <title>Complete genome sequence of a multiple drug resistant Salmonella enterica serovar Typhi CT18.</title>
        <authorList>
            <person name="Parkhill J."/>
            <person name="Dougan G."/>
            <person name="James K.D."/>
            <person name="Thomson N.R."/>
            <person name="Pickard D."/>
            <person name="Wain J."/>
            <person name="Churcher C.M."/>
            <person name="Mungall K.L."/>
            <person name="Bentley S.D."/>
            <person name="Holden M.T.G."/>
            <person name="Sebaihia M."/>
            <person name="Baker S."/>
            <person name="Basham D."/>
            <person name="Brooks K."/>
            <person name="Chillingworth T."/>
            <person name="Connerton P."/>
            <person name="Cronin A."/>
            <person name="Davis P."/>
            <person name="Davies R.M."/>
            <person name="Dowd L."/>
            <person name="White N."/>
            <person name="Farrar J."/>
            <person name="Feltwell T."/>
            <person name="Hamlin N."/>
            <person name="Haque A."/>
            <person name="Hien T.T."/>
            <person name="Holroyd S."/>
            <person name="Jagels K."/>
            <person name="Krogh A."/>
            <person name="Larsen T.S."/>
            <person name="Leather S."/>
            <person name="Moule S."/>
            <person name="O'Gaora P."/>
            <person name="Parry C."/>
            <person name="Quail M.A."/>
            <person name="Rutherford K.M."/>
            <person name="Simmonds M."/>
            <person name="Skelton J."/>
            <person name="Stevens K."/>
            <person name="Whitehead S."/>
            <person name="Barrell B.G."/>
        </authorList>
    </citation>
    <scope>NUCLEOTIDE SEQUENCE [LARGE SCALE GENOMIC DNA]</scope>
    <source>
        <strain>CT18</strain>
    </source>
</reference>
<reference key="2">
    <citation type="journal article" date="2003" name="J. Bacteriol.">
        <title>Comparative genomics of Salmonella enterica serovar Typhi strains Ty2 and CT18.</title>
        <authorList>
            <person name="Deng W."/>
            <person name="Liou S.-R."/>
            <person name="Plunkett G. III"/>
            <person name="Mayhew G.F."/>
            <person name="Rose D.J."/>
            <person name="Burland V."/>
            <person name="Kodoyianni V."/>
            <person name="Schwartz D.C."/>
            <person name="Blattner F.R."/>
        </authorList>
    </citation>
    <scope>NUCLEOTIDE SEQUENCE [LARGE SCALE GENOMIC DNA]</scope>
    <source>
        <strain>ATCC 700931 / Ty2</strain>
    </source>
</reference>
<proteinExistence type="inferred from homology"/>
<keyword id="KW-0050">Antiport</keyword>
<keyword id="KW-0997">Cell inner membrane</keyword>
<keyword id="KW-1003">Cell membrane</keyword>
<keyword id="KW-0868">Chloride</keyword>
<keyword id="KW-0406">Ion transport</keyword>
<keyword id="KW-0472">Membrane</keyword>
<keyword id="KW-0812">Transmembrane</keyword>
<keyword id="KW-1133">Transmembrane helix</keyword>
<keyword id="KW-0813">Transport</keyword>
<evidence type="ECO:0000255" key="1">
    <source>
        <dbReference type="HAMAP-Rule" id="MF_01128"/>
    </source>
</evidence>
<sequence length="473" mass="50395">MKTDTSTFLAQQIVRLRRRDQIRRLMQRDKTPLAILFMAAVVGTLTGLVGVAFEKTVSWVQNMRIGALVQVADHAFLLWPLAFILSALLAMVGYFLVRKFAPEAGGSGIPEIEGALEELRPVRWWRVLPVKFIGGMGTLGAGMVLGREGPTVQIGGNLGRMVLDVFRMRSAEARHTLLATGAAAGLSAAFNAPLAGILFIIEEMRPQFRYNLISIKAVFTGVIMSSIVFRIFNGEAPIIEVGKLSDAPVNTLWLYLILGIIFGCVGPVFNSLVLRTQDMFQRFHGGEIKKWVLMGGAIGGLCGILGLIEPAAAGGGFNLIPIAAAGNFSVGLLLFIFITRVVTTLLCFSSGAPGGIFAPMLALGTLLGTAFGMAAAVLFPQYHLEAGTFAIAGMGALMAASVRAPLTGIVLVLEMTDNYQLILPMIITCLGATLLAQFLGGKPLYSTILARTLAKQDAEQAAKNQNAPAGENT</sequence>
<accession>Q8Z9B3</accession>
<protein>
    <recommendedName>
        <fullName evidence="1">H(+)/Cl(-) exchange transporter ClcA</fullName>
    </recommendedName>
</protein>